<sequence length="152" mass="17400">MQCPFCNHGELKVIDSRNAPEANAIKRRRECLNCGQRFTTFETVELTLQVLKRDGRYENFQESKLINGLNAASSHTRIGQDQVHAIASNVKSELLGKQNREISTKEIGELVMKYLKKADMIAYIRFACVYRRFKDVGELMEVLLSATPDMEK</sequence>
<proteinExistence type="inferred from homology"/>
<name>NRDR_CHLFF</name>
<accession>Q253H1</accession>
<dbReference type="EMBL" id="AP006861">
    <property type="protein sequence ID" value="BAE81567.1"/>
    <property type="molecule type" value="Genomic_DNA"/>
</dbReference>
<dbReference type="RefSeq" id="WP_006342890.1">
    <property type="nucleotide sequence ID" value="NC_007899.1"/>
</dbReference>
<dbReference type="SMR" id="Q253H1"/>
<dbReference type="STRING" id="264202.gene:10544623"/>
<dbReference type="GeneID" id="93024766"/>
<dbReference type="KEGG" id="cfe:BAE81567.1"/>
<dbReference type="eggNOG" id="COG1327">
    <property type="taxonomic scope" value="Bacteria"/>
</dbReference>
<dbReference type="HOGENOM" id="CLU_108412_0_0_0"/>
<dbReference type="OrthoDB" id="9807461at2"/>
<dbReference type="Proteomes" id="UP000001260">
    <property type="component" value="Chromosome"/>
</dbReference>
<dbReference type="GO" id="GO:0005524">
    <property type="term" value="F:ATP binding"/>
    <property type="evidence" value="ECO:0007669"/>
    <property type="project" value="UniProtKB-KW"/>
</dbReference>
<dbReference type="GO" id="GO:0003677">
    <property type="term" value="F:DNA binding"/>
    <property type="evidence" value="ECO:0007669"/>
    <property type="project" value="UniProtKB-KW"/>
</dbReference>
<dbReference type="GO" id="GO:0008270">
    <property type="term" value="F:zinc ion binding"/>
    <property type="evidence" value="ECO:0007669"/>
    <property type="project" value="UniProtKB-UniRule"/>
</dbReference>
<dbReference type="GO" id="GO:0045892">
    <property type="term" value="P:negative regulation of DNA-templated transcription"/>
    <property type="evidence" value="ECO:0007669"/>
    <property type="project" value="UniProtKB-UniRule"/>
</dbReference>
<dbReference type="HAMAP" id="MF_00440">
    <property type="entry name" value="NrdR"/>
    <property type="match status" value="1"/>
</dbReference>
<dbReference type="InterPro" id="IPR005144">
    <property type="entry name" value="ATP-cone_dom"/>
</dbReference>
<dbReference type="InterPro" id="IPR055173">
    <property type="entry name" value="NrdR-like_N"/>
</dbReference>
<dbReference type="InterPro" id="IPR003796">
    <property type="entry name" value="RNR_NrdR-like"/>
</dbReference>
<dbReference type="NCBIfam" id="TIGR00244">
    <property type="entry name" value="transcriptional regulator NrdR"/>
    <property type="match status" value="1"/>
</dbReference>
<dbReference type="PANTHER" id="PTHR30455">
    <property type="entry name" value="TRANSCRIPTIONAL REPRESSOR NRDR"/>
    <property type="match status" value="1"/>
</dbReference>
<dbReference type="PANTHER" id="PTHR30455:SF2">
    <property type="entry name" value="TRANSCRIPTIONAL REPRESSOR NRDR"/>
    <property type="match status" value="1"/>
</dbReference>
<dbReference type="Pfam" id="PF03477">
    <property type="entry name" value="ATP-cone"/>
    <property type="match status" value="1"/>
</dbReference>
<dbReference type="Pfam" id="PF22811">
    <property type="entry name" value="Zn_ribbon_NrdR"/>
    <property type="match status" value="1"/>
</dbReference>
<dbReference type="PROSITE" id="PS51161">
    <property type="entry name" value="ATP_CONE"/>
    <property type="match status" value="1"/>
</dbReference>
<comment type="function">
    <text evidence="1">Negatively regulates transcription of bacterial ribonucleotide reductase nrd genes and operons by binding to NrdR-boxes.</text>
</comment>
<comment type="cofactor">
    <cofactor evidence="1">
        <name>Zn(2+)</name>
        <dbReference type="ChEBI" id="CHEBI:29105"/>
    </cofactor>
    <text evidence="1">Binds 1 zinc ion.</text>
</comment>
<comment type="similarity">
    <text evidence="1">Belongs to the NrdR family.</text>
</comment>
<evidence type="ECO:0000255" key="1">
    <source>
        <dbReference type="HAMAP-Rule" id="MF_00440"/>
    </source>
</evidence>
<feature type="chain" id="PRO_0000264166" description="Transcriptional repressor NrdR">
    <location>
        <begin position="1"/>
        <end position="152"/>
    </location>
</feature>
<feature type="domain" description="ATP-cone" evidence="1">
    <location>
        <begin position="48"/>
        <end position="138"/>
    </location>
</feature>
<feature type="zinc finger region" evidence="1">
    <location>
        <begin position="3"/>
        <end position="34"/>
    </location>
</feature>
<organism>
    <name type="scientific">Chlamydia felis (strain Fe/C-56)</name>
    <name type="common">Chlamydophila felis</name>
    <dbReference type="NCBI Taxonomy" id="264202"/>
    <lineage>
        <taxon>Bacteria</taxon>
        <taxon>Pseudomonadati</taxon>
        <taxon>Chlamydiota</taxon>
        <taxon>Chlamydiia</taxon>
        <taxon>Chlamydiales</taxon>
        <taxon>Chlamydiaceae</taxon>
        <taxon>Chlamydia/Chlamydophila group</taxon>
        <taxon>Chlamydia</taxon>
    </lineage>
</organism>
<protein>
    <recommendedName>
        <fullName evidence="1">Transcriptional repressor NrdR</fullName>
    </recommendedName>
</protein>
<keyword id="KW-0067">ATP-binding</keyword>
<keyword id="KW-0238">DNA-binding</keyword>
<keyword id="KW-0479">Metal-binding</keyword>
<keyword id="KW-0547">Nucleotide-binding</keyword>
<keyword id="KW-0678">Repressor</keyword>
<keyword id="KW-0804">Transcription</keyword>
<keyword id="KW-0805">Transcription regulation</keyword>
<keyword id="KW-0862">Zinc</keyword>
<keyword id="KW-0863">Zinc-finger</keyword>
<gene>
    <name evidence="1" type="primary">nrdR</name>
    <name type="ordered locus">CF0795</name>
</gene>
<reference key="1">
    <citation type="journal article" date="2006" name="DNA Res.">
        <title>Genome sequence of the cat pathogen, Chlamydophila felis.</title>
        <authorList>
            <person name="Azuma Y."/>
            <person name="Hirakawa H."/>
            <person name="Yamashita A."/>
            <person name="Cai Y."/>
            <person name="Rahman M.A."/>
            <person name="Suzuki H."/>
            <person name="Mitaku S."/>
            <person name="Toh H."/>
            <person name="Goto S."/>
            <person name="Murakami T."/>
            <person name="Sugi K."/>
            <person name="Hayashi H."/>
            <person name="Fukushi H."/>
            <person name="Hattori M."/>
            <person name="Kuhara S."/>
            <person name="Shirai M."/>
        </authorList>
    </citation>
    <scope>NUCLEOTIDE SEQUENCE [LARGE SCALE GENOMIC DNA]</scope>
    <source>
        <strain>Fe/C-56</strain>
    </source>
</reference>